<protein>
    <recommendedName>
        <fullName evidence="2">Probable endoribonuclease YicC</fullName>
        <ecNumber evidence="1">3.1.26.-</ecNumber>
    </recommendedName>
</protein>
<organism>
    <name type="scientific">Salmonella typhimurium (strain LT2 / SGSC1412 / ATCC 700720)</name>
    <dbReference type="NCBI Taxonomy" id="99287"/>
    <lineage>
        <taxon>Bacteria</taxon>
        <taxon>Pseudomonadati</taxon>
        <taxon>Pseudomonadota</taxon>
        <taxon>Gammaproteobacteria</taxon>
        <taxon>Enterobacterales</taxon>
        <taxon>Enterobacteriaceae</taxon>
        <taxon>Salmonella</taxon>
    </lineage>
</organism>
<accession>Q7CPH3</accession>
<feature type="chain" id="PRO_0000458469" description="Probable endoribonuclease YicC">
    <location>
        <begin position="1"/>
        <end position="287"/>
    </location>
</feature>
<evidence type="ECO:0000250" key="1">
    <source>
        <dbReference type="UniProtKB" id="O34441"/>
    </source>
</evidence>
<evidence type="ECO:0000250" key="2">
    <source>
        <dbReference type="UniProtKB" id="P23839"/>
    </source>
</evidence>
<evidence type="ECO:0000269" key="3">
    <source>
    </source>
</evidence>
<evidence type="ECO:0000303" key="4">
    <source>
    </source>
</evidence>
<evidence type="ECO:0000305" key="5"/>
<evidence type="ECO:0000312" key="6">
    <source>
        <dbReference type="EMBL" id="AAL22594.1"/>
    </source>
</evidence>
<keyword id="KW-0255">Endonuclease</keyword>
<keyword id="KW-0378">Hydrolase</keyword>
<keyword id="KW-0540">Nuclease</keyword>
<keyword id="KW-1185">Reference proteome</keyword>
<dbReference type="EC" id="3.1.26.-" evidence="1"/>
<dbReference type="EMBL" id="AE006468">
    <property type="protein sequence ID" value="AAL22594.1"/>
    <property type="molecule type" value="Genomic_DNA"/>
</dbReference>
<dbReference type="RefSeq" id="NP_462635.1">
    <property type="nucleotide sequence ID" value="NC_003197.2"/>
</dbReference>
<dbReference type="RefSeq" id="WP_000621352.1">
    <property type="nucleotide sequence ID" value="NC_003197.2"/>
</dbReference>
<dbReference type="SMR" id="Q7CPH3"/>
<dbReference type="STRING" id="99287.STM3735"/>
<dbReference type="PaxDb" id="99287-STM3735"/>
<dbReference type="DNASU" id="1255259"/>
<dbReference type="GeneID" id="1255259"/>
<dbReference type="KEGG" id="stm:STM3735"/>
<dbReference type="PATRIC" id="fig|99287.12.peg.3951"/>
<dbReference type="HOGENOM" id="CLU_076609_0_0_6"/>
<dbReference type="OMA" id="INREVNT"/>
<dbReference type="PhylomeDB" id="Q7CPH3"/>
<dbReference type="BioCyc" id="SENT99287:STM3735-MONOMER"/>
<dbReference type="Proteomes" id="UP000001014">
    <property type="component" value="Chromosome"/>
</dbReference>
<dbReference type="GO" id="GO:0016891">
    <property type="term" value="F:RNA endonuclease activity, producing 5'-phosphomonoesters"/>
    <property type="evidence" value="ECO:0000318"/>
    <property type="project" value="GO_Central"/>
</dbReference>
<dbReference type="GO" id="GO:0006401">
    <property type="term" value="P:RNA catabolic process"/>
    <property type="evidence" value="ECO:0000318"/>
    <property type="project" value="GO_Central"/>
</dbReference>
<dbReference type="InterPro" id="IPR013551">
    <property type="entry name" value="YicC-like_C"/>
</dbReference>
<dbReference type="InterPro" id="IPR013527">
    <property type="entry name" value="YicC-like_N"/>
</dbReference>
<dbReference type="InterPro" id="IPR005229">
    <property type="entry name" value="YicC/YloC-like"/>
</dbReference>
<dbReference type="NCBIfam" id="TIGR00255">
    <property type="entry name" value="YicC/YloC family endoribonuclease"/>
    <property type="match status" value="1"/>
</dbReference>
<dbReference type="PANTHER" id="PTHR30636">
    <property type="entry name" value="UPF0701 PROTEIN YICC"/>
    <property type="match status" value="1"/>
</dbReference>
<dbReference type="PANTHER" id="PTHR30636:SF3">
    <property type="entry name" value="UPF0701 PROTEIN YICC"/>
    <property type="match status" value="1"/>
</dbReference>
<dbReference type="Pfam" id="PF08340">
    <property type="entry name" value="YicC-like_C"/>
    <property type="match status" value="1"/>
</dbReference>
<dbReference type="Pfam" id="PF03755">
    <property type="entry name" value="YicC-like_N"/>
    <property type="match status" value="1"/>
</dbReference>
<proteinExistence type="inferred from homology"/>
<reference evidence="6" key="1">
    <citation type="journal article" date="2001" name="Nature">
        <title>Complete genome sequence of Salmonella enterica serovar Typhimurium LT2.</title>
        <authorList>
            <person name="McClelland M."/>
            <person name="Sanderson K.E."/>
            <person name="Spieth J."/>
            <person name="Clifton S.W."/>
            <person name="Latreille P."/>
            <person name="Courtney L."/>
            <person name="Porwollik S."/>
            <person name="Ali J."/>
            <person name="Dante M."/>
            <person name="Du F."/>
            <person name="Hou S."/>
            <person name="Layman D."/>
            <person name="Leonard S."/>
            <person name="Nguyen C."/>
            <person name="Scott K."/>
            <person name="Holmes A."/>
            <person name="Grewal N."/>
            <person name="Mulvaney E."/>
            <person name="Ryan E."/>
            <person name="Sun H."/>
            <person name="Florea L."/>
            <person name="Miller W."/>
            <person name="Stoneking T."/>
            <person name="Nhan M."/>
            <person name="Waterston R."/>
            <person name="Wilson R.K."/>
        </authorList>
    </citation>
    <scope>NUCLEOTIDE SEQUENCE [LARGE SCALE GENOMIC DNA]</scope>
    <source>
        <strain>LT2 / SGSC1412 / ATCC 700720</strain>
    </source>
</reference>
<reference key="2">
    <citation type="journal article" date="2023" name="Mol. Plant Microbe Interact.">
        <title>Role of Stress-Induced Proteins RpoS and YicC in the Persistence of Salmonella enterica subsp. enterica Serotype Typhimurium in Tomato Plants.</title>
        <authorList>
            <person name="Deblais L."/>
            <person name="Ranjit S."/>
            <person name="Vrisman C."/>
            <person name="Antony L."/>
            <person name="Scaria J."/>
            <person name="Miller S.A."/>
            <person name="Rajashekara G."/>
        </authorList>
    </citation>
    <scope>DISRUPTION PHENOTYPE</scope>
    <source>
        <strain>JSG210</strain>
    </source>
</reference>
<gene>
    <name evidence="4" type="primary">yicC</name>
    <name evidence="6" type="ordered locus">STM3735</name>
</gene>
<name>YICC_SALTY</name>
<comment type="function">
    <text evidence="1">Probably a ssRNA endonuclease.</text>
</comment>
<comment type="function">
    <text evidence="2">Might contribute to small RNA (sRNA) regulation.</text>
</comment>
<comment type="cofactor">
    <cofactor evidence="1">
        <name>a divalent metal cation</name>
        <dbReference type="ChEBI" id="CHEBI:60240"/>
    </cofactor>
</comment>
<comment type="disruption phenotype">
    <text evidence="3">In strain JSG210, wild-type growth rate and motility, increased biofilm production in vitro, decreased persistence in inoculated tomato cotyledons (cv. Tiny Tim seedlings). Wild-type strain JSG210 has high persistence in tomato plant organs; fresh produce contaminated with Salmonella contributes to food safety risks.</text>
</comment>
<comment type="similarity">
    <text evidence="5">Belongs to the YicC/YloC family.</text>
</comment>
<sequence length="287" mass="33125">MIRSMTAYARREIKGEWGSATWEMRSVNQRYLETYFRLPEQFRSLEPVVRERIRTRLTRGKVECMLRFEPDASAQGELILNEKLAKQLVSAANWVKMQSDEGEINPVDILRWPGVMAAQEQDLDAIAAEILAALDGTLDDFIVARETEGQALKALIEQRLEGVSAEVAKVRAHMPEILQWQRERLVAKLEDAQVQLENNRLEQELVMMAQRIDVAEELDRLEAHVKETYNILKKKEAVGRRLDFMMQEFNRESNTLASKSINADVTNSAIELKVLIEQMREQIQNIE</sequence>